<organism>
    <name type="scientific">Blattella germanica</name>
    <name type="common">German cockroach</name>
    <name type="synonym">Blatta germanica</name>
    <dbReference type="NCBI Taxonomy" id="6973"/>
    <lineage>
        <taxon>Eukaryota</taxon>
        <taxon>Metazoa</taxon>
        <taxon>Ecdysozoa</taxon>
        <taxon>Arthropoda</taxon>
        <taxon>Hexapoda</taxon>
        <taxon>Insecta</taxon>
        <taxon>Pterygota</taxon>
        <taxon>Neoptera</taxon>
        <taxon>Polyneoptera</taxon>
        <taxon>Dictyoptera</taxon>
        <taxon>Blattodea</taxon>
        <taxon>Blaberoidea</taxon>
        <taxon>Blattellidae</taxon>
        <taxon>Blattella</taxon>
    </lineage>
</organism>
<reference key="1">
    <citation type="journal article" date="1990" name="Biol. Chem. Hoppe-Seyler">
        <title>Primary structures of hypertrehalosaemic neuropeptides isolated from the corpora cardiaca of the cockroaches Leucophaea maderae, Gromphadorhina portentosa, Blattella germanica and Blatta orientalis and of the stick insect Extatosoma tiaratum assigned by tandem fast atom bombardment mass spectrometry.</title>
        <authorList>
            <person name="Gaede G."/>
            <person name="Rinehart K.L. Jr."/>
        </authorList>
    </citation>
    <scope>PROTEIN SEQUENCE</scope>
</reference>
<reference key="2">
    <citation type="journal article" date="1990" name="Neuropeptides">
        <title>Structure of the hypertrehalosemic neuropeptide of the German cockroach, Blattella germanica.</title>
        <authorList>
            <person name="Veenstra J.A."/>
            <person name="Camps F."/>
        </authorList>
    </citation>
    <scope>PROTEIN SEQUENCE</scope>
</reference>
<reference key="3">
    <citation type="journal article" date="2009" name="BMC Evol. Biol.">
        <title>A proteomic approach for studying insect phylogeny: CAPA peptides of ancient insect taxa (Dictyoptera, Blattoptera) as a test case.</title>
        <authorList>
            <person name="Roth S."/>
            <person name="Fromm B."/>
            <person name="Gaede G."/>
            <person name="Predel R."/>
        </authorList>
    </citation>
    <scope>PROTEIN SEQUENCE</scope>
    <scope>PYROGLUTAMATE FORMATION AT GLN-1</scope>
    <scope>AMIDATION AT THR-10</scope>
    <source>
        <tissue>Corpora cardiaca</tissue>
    </source>
</reference>
<evidence type="ECO:0000269" key="1">
    <source>
    </source>
</evidence>
<evidence type="ECO:0000305" key="2"/>
<dbReference type="PIR" id="A60421">
    <property type="entry name" value="A60421"/>
</dbReference>
<dbReference type="GO" id="GO:0005576">
    <property type="term" value="C:extracellular region"/>
    <property type="evidence" value="ECO:0007669"/>
    <property type="project" value="UniProtKB-SubCell"/>
</dbReference>
<dbReference type="GO" id="GO:0005179">
    <property type="term" value="F:hormone activity"/>
    <property type="evidence" value="ECO:0007669"/>
    <property type="project" value="UniProtKB-KW"/>
</dbReference>
<dbReference type="GO" id="GO:0007218">
    <property type="term" value="P:neuropeptide signaling pathway"/>
    <property type="evidence" value="ECO:0007669"/>
    <property type="project" value="UniProtKB-KW"/>
</dbReference>
<dbReference type="InterPro" id="IPR002047">
    <property type="entry name" value="Adipokinetic_hormone_CS"/>
</dbReference>
<dbReference type="PROSITE" id="PS00256">
    <property type="entry name" value="AKH"/>
    <property type="match status" value="1"/>
</dbReference>
<feature type="peptide" id="PRO_0000043426" description="Hypertrehalosaemic hormone">
    <location>
        <begin position="1"/>
        <end position="10"/>
    </location>
</feature>
<feature type="modified residue" description="Pyrrolidone carboxylic acid" evidence="1">
    <location>
        <position position="1"/>
    </location>
</feature>
<feature type="modified residue" description="Threonine amide" evidence="1">
    <location>
        <position position="10"/>
    </location>
</feature>
<protein>
    <recommendedName>
        <fullName>Hypertrehalosaemic hormone</fullName>
        <shortName>HTH</shortName>
    </recommendedName>
    <alternativeName>
        <fullName>Adipokinetic hormone 1</fullName>
        <shortName>BlaGe-AKH-1</shortName>
    </alternativeName>
    <alternativeName>
        <fullName>Hypertrehalosaemic neuropeptide</fullName>
    </alternativeName>
</protein>
<proteinExistence type="evidence at protein level"/>
<sequence length="10" mass="1092">QVNFSPGWGT</sequence>
<accession>P84220</accession>
<accession>P10939</accession>
<comment type="function">
    <text>Hypertrehalosaemic factors are neuropeptides that elevate the level of trehalose in the hemolymph (trehalose is the major carbohydrate in the hemolymph of insects).</text>
</comment>
<comment type="subcellular location">
    <subcellularLocation>
        <location>Secreted</location>
    </subcellularLocation>
</comment>
<comment type="similarity">
    <text evidence="2">Belongs to the AKH/HRTH/RPCH family.</text>
</comment>
<name>HTF_BLAGE</name>
<keyword id="KW-0027">Amidation</keyword>
<keyword id="KW-0903">Direct protein sequencing</keyword>
<keyword id="KW-0372">Hormone</keyword>
<keyword id="KW-0527">Neuropeptide</keyword>
<keyword id="KW-0873">Pyrrolidone carboxylic acid</keyword>
<keyword id="KW-0964">Secreted</keyword>